<proteinExistence type="evidence at protein level"/>
<organism>
    <name type="scientific">Arabidopsis thaliana</name>
    <name type="common">Mouse-ear cress</name>
    <dbReference type="NCBI Taxonomy" id="3702"/>
    <lineage>
        <taxon>Eukaryota</taxon>
        <taxon>Viridiplantae</taxon>
        <taxon>Streptophyta</taxon>
        <taxon>Embryophyta</taxon>
        <taxon>Tracheophyta</taxon>
        <taxon>Spermatophyta</taxon>
        <taxon>Magnoliopsida</taxon>
        <taxon>eudicotyledons</taxon>
        <taxon>Gunneridae</taxon>
        <taxon>Pentapetalae</taxon>
        <taxon>rosids</taxon>
        <taxon>malvids</taxon>
        <taxon>Brassicales</taxon>
        <taxon>Brassicaceae</taxon>
        <taxon>Camelineae</taxon>
        <taxon>Arabidopsis</taxon>
    </lineage>
</organism>
<gene>
    <name evidence="4" type="primary">RUS2</name>
    <name evidence="5" type="synonym">WXR1</name>
    <name evidence="7 9" type="ordered locus">At2g31190</name>
    <name evidence="8" type="ORF">F16D14.3</name>
</gene>
<protein>
    <recommendedName>
        <fullName evidence="4">Protein root UVB sensitive 2, chloroplastic</fullName>
    </recommendedName>
    <alternativeName>
        <fullName evidence="5">Protein WEAK AUXIN RESPONSE 1</fullName>
    </alternativeName>
</protein>
<feature type="chain" id="PRO_0000430819" description="Protein root UVB sensitive 2, chloroplastic">
    <location>
        <begin position="1"/>
        <end position="433"/>
    </location>
</feature>
<feature type="splice variant" id="VSP_057100" description="In isoform 2.">
    <location>
        <position position="5"/>
    </location>
</feature>
<feature type="mutagenesis site" description="In wxr1; reduced auxin transport from the shoot to the root." evidence="2">
    <original>S</original>
    <variation>L</variation>
    <location>
        <position position="105"/>
    </location>
</feature>
<name>RUS2_ARATH</name>
<accession>Q9SJX7</accession>
<accession>F4IQQ5</accession>
<sequence length="433" mass="48259">MQFLQEKVKLIKKEDPVMLKSPEDFPVYWFETSDSVSHRYQFQSDGHLSMKVVDDARPVPQKMVESFLNKFFPSGYPYSVNEGYLRYTQFRALQHFSSAALSVLSTQSLLFAAGLRPTPAQATVVSWILKDGMQHVGKLICSNLGARMDSEPKRWRILADVLYDLGTGLELVSPLCPHLFLEMAGLGNFAKGMATVAARATRLPIYSSFAKEGNLSDIFAKGEAISTLFNVAGIGAGIQLASTICSSMEGKLVVGSILSVVHVYSVVEQMRGVPINTLNPQRTALIVANFLKTGKVPSPPDLRFQEDLMFPERPIQDAGNVKVGRALHKAVKPSEVQRLKQVFVEEKFLLSHGKSWTDMVLEHDATGEDALRGWLVAAYVKSMTKIYNDPDDIILQDAYDKMNDVFNPFLSQVQAKGWYTDRFLDGTGTRFAW</sequence>
<dbReference type="EMBL" id="AC006593">
    <property type="protein sequence ID" value="AAD20664.2"/>
    <property type="molecule type" value="Genomic_DNA"/>
</dbReference>
<dbReference type="EMBL" id="CP002685">
    <property type="protein sequence ID" value="AEC08505.1"/>
    <property type="molecule type" value="Genomic_DNA"/>
</dbReference>
<dbReference type="EMBL" id="CP002685">
    <property type="protein sequence ID" value="AEC08506.1"/>
    <property type="molecule type" value="Genomic_DNA"/>
</dbReference>
<dbReference type="EMBL" id="AY085428">
    <property type="protein sequence ID" value="AAM62655.1"/>
    <property type="molecule type" value="mRNA"/>
</dbReference>
<dbReference type="EMBL" id="BT025987">
    <property type="protein sequence ID" value="ABG25076.1"/>
    <property type="molecule type" value="mRNA"/>
</dbReference>
<dbReference type="PIR" id="F84717">
    <property type="entry name" value="F84717"/>
</dbReference>
<dbReference type="RefSeq" id="NP_001189649.1">
    <molecule id="Q9SJX7-2"/>
    <property type="nucleotide sequence ID" value="NM_001202720.1"/>
</dbReference>
<dbReference type="RefSeq" id="NP_565718.1">
    <molecule id="Q9SJX7-1"/>
    <property type="nucleotide sequence ID" value="NM_128675.3"/>
</dbReference>
<dbReference type="BioGRID" id="3023">
    <property type="interactions" value="1"/>
</dbReference>
<dbReference type="FunCoup" id="Q9SJX7">
    <property type="interactions" value="494"/>
</dbReference>
<dbReference type="IntAct" id="Q9SJX7">
    <property type="interactions" value="2"/>
</dbReference>
<dbReference type="STRING" id="3702.Q9SJX7"/>
<dbReference type="GlyGen" id="Q9SJX7">
    <property type="glycosylation" value="1 site"/>
</dbReference>
<dbReference type="PaxDb" id="3702-AT2G31190.1"/>
<dbReference type="ProteomicsDB" id="226636">
    <molecule id="Q9SJX7-1"/>
</dbReference>
<dbReference type="EnsemblPlants" id="AT2G31190.1">
    <molecule id="Q9SJX7-1"/>
    <property type="protein sequence ID" value="AT2G31190.1"/>
    <property type="gene ID" value="AT2G31190"/>
</dbReference>
<dbReference type="EnsemblPlants" id="AT2G31190.2">
    <molecule id="Q9SJX7-2"/>
    <property type="protein sequence ID" value="AT2G31190.2"/>
    <property type="gene ID" value="AT2G31190"/>
</dbReference>
<dbReference type="GeneID" id="817675"/>
<dbReference type="Gramene" id="AT2G31190.1">
    <molecule id="Q9SJX7-1"/>
    <property type="protein sequence ID" value="AT2G31190.1"/>
    <property type="gene ID" value="AT2G31190"/>
</dbReference>
<dbReference type="Gramene" id="AT2G31190.2">
    <molecule id="Q9SJX7-2"/>
    <property type="protein sequence ID" value="AT2G31190.2"/>
    <property type="gene ID" value="AT2G31190"/>
</dbReference>
<dbReference type="KEGG" id="ath:AT2G31190"/>
<dbReference type="Araport" id="AT2G31190"/>
<dbReference type="TAIR" id="AT2G31190">
    <property type="gene designation" value="RUS2"/>
</dbReference>
<dbReference type="eggNOG" id="KOG4249">
    <property type="taxonomic scope" value="Eukaryota"/>
</dbReference>
<dbReference type="InParanoid" id="Q9SJX7"/>
<dbReference type="OMA" id="YLNYQFF"/>
<dbReference type="PhylomeDB" id="Q9SJX7"/>
<dbReference type="PRO" id="PR:Q9SJX7"/>
<dbReference type="Proteomes" id="UP000006548">
    <property type="component" value="Chromosome 2"/>
</dbReference>
<dbReference type="ExpressionAtlas" id="Q9SJX7">
    <property type="expression patterns" value="baseline and differential"/>
</dbReference>
<dbReference type="GO" id="GO:0009941">
    <property type="term" value="C:chloroplast envelope"/>
    <property type="evidence" value="ECO:0007005"/>
    <property type="project" value="TAIR"/>
</dbReference>
<dbReference type="GO" id="GO:0009536">
    <property type="term" value="C:plastid"/>
    <property type="evidence" value="ECO:0000314"/>
    <property type="project" value="TAIR"/>
</dbReference>
<dbReference type="GO" id="GO:0009926">
    <property type="term" value="P:auxin polar transport"/>
    <property type="evidence" value="ECO:0000315"/>
    <property type="project" value="TAIR"/>
</dbReference>
<dbReference type="GO" id="GO:0010224">
    <property type="term" value="P:response to UV-B"/>
    <property type="evidence" value="ECO:0000315"/>
    <property type="project" value="TAIR"/>
</dbReference>
<dbReference type="InterPro" id="IPR006968">
    <property type="entry name" value="RUS_fam"/>
</dbReference>
<dbReference type="InterPro" id="IPR055412">
    <property type="entry name" value="UVB_sens_C"/>
</dbReference>
<dbReference type="InterPro" id="IPR054549">
    <property type="entry name" value="UVB_sens_RUS_dom"/>
</dbReference>
<dbReference type="PANTHER" id="PTHR12770:SF5">
    <property type="entry name" value="PROTEIN ROOT UVB SENSITIVE 2, CHLOROPLASTIC"/>
    <property type="match status" value="1"/>
</dbReference>
<dbReference type="PANTHER" id="PTHR12770">
    <property type="entry name" value="RUS1 FAMILY PROTEIN C16ORF58"/>
    <property type="match status" value="1"/>
</dbReference>
<dbReference type="Pfam" id="PF24160">
    <property type="entry name" value="UVB_sens_C"/>
    <property type="match status" value="1"/>
</dbReference>
<dbReference type="Pfam" id="PF04884">
    <property type="entry name" value="UVB_sens_prot"/>
    <property type="match status" value="1"/>
</dbReference>
<reference key="1">
    <citation type="journal article" date="1999" name="Nature">
        <title>Sequence and analysis of chromosome 2 of the plant Arabidopsis thaliana.</title>
        <authorList>
            <person name="Lin X."/>
            <person name="Kaul S."/>
            <person name="Rounsley S.D."/>
            <person name="Shea T.P."/>
            <person name="Benito M.-I."/>
            <person name="Town C.D."/>
            <person name="Fujii C.Y."/>
            <person name="Mason T.M."/>
            <person name="Bowman C.L."/>
            <person name="Barnstead M.E."/>
            <person name="Feldblyum T.V."/>
            <person name="Buell C.R."/>
            <person name="Ketchum K.A."/>
            <person name="Lee J.J."/>
            <person name="Ronning C.M."/>
            <person name="Koo H.L."/>
            <person name="Moffat K.S."/>
            <person name="Cronin L.A."/>
            <person name="Shen M."/>
            <person name="Pai G."/>
            <person name="Van Aken S."/>
            <person name="Umayam L."/>
            <person name="Tallon L.J."/>
            <person name="Gill J.E."/>
            <person name="Adams M.D."/>
            <person name="Carrera A.J."/>
            <person name="Creasy T.H."/>
            <person name="Goodman H.M."/>
            <person name="Somerville C.R."/>
            <person name="Copenhaver G.P."/>
            <person name="Preuss D."/>
            <person name="Nierman W.C."/>
            <person name="White O."/>
            <person name="Eisen J.A."/>
            <person name="Salzberg S.L."/>
            <person name="Fraser C.M."/>
            <person name="Venter J.C."/>
        </authorList>
    </citation>
    <scope>NUCLEOTIDE SEQUENCE [LARGE SCALE GENOMIC DNA]</scope>
    <source>
        <strain>cv. Columbia</strain>
    </source>
</reference>
<reference key="2">
    <citation type="journal article" date="2017" name="Plant J.">
        <title>Araport11: a complete reannotation of the Arabidopsis thaliana reference genome.</title>
        <authorList>
            <person name="Cheng C.Y."/>
            <person name="Krishnakumar V."/>
            <person name="Chan A.P."/>
            <person name="Thibaud-Nissen F."/>
            <person name="Schobel S."/>
            <person name="Town C.D."/>
        </authorList>
    </citation>
    <scope>GENOME REANNOTATION</scope>
    <source>
        <strain>cv. Columbia</strain>
    </source>
</reference>
<reference key="3">
    <citation type="submission" date="2002-03" db="EMBL/GenBank/DDBJ databases">
        <title>Full-length cDNA from Arabidopsis thaliana.</title>
        <authorList>
            <person name="Brover V.V."/>
            <person name="Troukhan M.E."/>
            <person name="Alexandrov N.A."/>
            <person name="Lu Y.-P."/>
            <person name="Flavell R.B."/>
            <person name="Feldmann K.A."/>
        </authorList>
    </citation>
    <scope>NUCLEOTIDE SEQUENCE [LARGE SCALE MRNA] (ISOFORM 1)</scope>
</reference>
<reference key="4">
    <citation type="submission" date="2006-06" db="EMBL/GenBank/DDBJ databases">
        <title>Arabidopsis ORF clones.</title>
        <authorList>
            <person name="Shinn P."/>
            <person name="Chen H."/>
            <person name="Kim C.J."/>
            <person name="Quinitio C."/>
            <person name="Ecker J.R."/>
        </authorList>
    </citation>
    <scope>NUCLEOTIDE SEQUENCE [MRNA] (ISOFORM 1)</scope>
    <source>
        <strain>cv. Columbia</strain>
    </source>
</reference>
<reference key="5">
    <citation type="journal article" date="2009" name="Plant Physiol.">
        <title>ROOT UV-B SENSITIVE2 acts with ROOT UV-B SENSITIVE1 in a root ultraviolet B-sensing pathway.</title>
        <authorList>
            <person name="Leasure C.D."/>
            <person name="Tong H."/>
            <person name="Yuen G."/>
            <person name="Hou X."/>
            <person name="Sun X."/>
            <person name="He Z.H."/>
        </authorList>
    </citation>
    <scope>IDENTIFICATION</scope>
    <scope>FUNCTION</scope>
    <scope>DISRUPTION PHENOTYPE</scope>
    <scope>TISSUE SPECIFICITY</scope>
    <scope>SUBCELLULAR LOCATION</scope>
    <scope>INTERACTION WITH RUS1</scope>
    <scope>GENE FAMILY</scope>
    <scope>NOMENCLATURE</scope>
    <source>
        <strain>cv. Columbia</strain>
    </source>
</reference>
<reference key="6">
    <citation type="journal article" date="2010" name="Plant Cell">
        <title>Arabidopsis ROOT UVB SENSITIVE2/WEAK AUXIN RESPONSE1 is required for polar auxin transport.</title>
        <authorList>
            <person name="Ge L."/>
            <person name="Peer W."/>
            <person name="Robert S."/>
            <person name="Swarup R."/>
            <person name="Ye S."/>
            <person name="Prigge M."/>
            <person name="Cohen J.D."/>
            <person name="Friml J."/>
            <person name="Murphy A."/>
            <person name="Tang D."/>
            <person name="Estelle M."/>
        </authorList>
    </citation>
    <scope>FUNCTION</scope>
    <scope>MUTAGENESIS OF SER-105</scope>
    <scope>TISSUE SPECIFICITY</scope>
    <scope>SUBCELLULAR LOCATION</scope>
</reference>
<reference key="7">
    <citation type="journal article" date="2011" name="Mol. Plant">
        <title>root uv-b sensitive mutants are suppressed by specific mutations in ASPARTATE AMINOTRANSFERASE2 and by exogenous vitamin B6.</title>
        <authorList>
            <person name="Leasure C.D."/>
            <person name="Tong H.Y."/>
            <person name="Hou X.W."/>
            <person name="Shelton A."/>
            <person name="Minton M."/>
            <person name="Esquerra R."/>
            <person name="Roje S."/>
            <person name="Hellmann H."/>
            <person name="He Z.H."/>
        </authorList>
    </citation>
    <scope>DISRUPTION PHENOTYPE</scope>
</reference>
<evidence type="ECO:0000269" key="1">
    <source>
    </source>
</evidence>
<evidence type="ECO:0000269" key="2">
    <source>
    </source>
</evidence>
<evidence type="ECO:0000269" key="3">
    <source>
    </source>
</evidence>
<evidence type="ECO:0000303" key="4">
    <source>
    </source>
</evidence>
<evidence type="ECO:0000303" key="5">
    <source>
    </source>
</evidence>
<evidence type="ECO:0000305" key="6"/>
<evidence type="ECO:0000312" key="7">
    <source>
        <dbReference type="Araport" id="AT2G31190"/>
    </source>
</evidence>
<evidence type="ECO:0000312" key="8">
    <source>
        <dbReference type="EMBL" id="AAD20664.2"/>
    </source>
</evidence>
<evidence type="ECO:0000312" key="9">
    <source>
        <dbReference type="EMBL" id="AEC08505.1"/>
    </source>
</evidence>
<keyword id="KW-0025">Alternative splicing</keyword>
<keyword id="KW-0934">Plastid</keyword>
<keyword id="KW-1185">Reference proteome</keyword>
<comment type="function">
    <text evidence="1 2">Involved in a root UV-B sensing pathway and in the protection against the hypersensitivity to very low-fluence-rate (VLF) UV-B. RSU1 and RUS2 are probably both negative modulators of the same UV-B perception pathway, which when overstimulated in the roots causes a block to postgermination development. Required for polar auxin transport and to maintain the normal levels of PIN proteins in the root.</text>
</comment>
<comment type="subunit">
    <text evidence="1">Interacts (via the DUF647 domain) with RUS1 (via the DUF647 domain).</text>
</comment>
<comment type="subcellular location">
    <subcellularLocation>
        <location evidence="2 4">Plastid</location>
    </subcellularLocation>
    <text evidence="4">May be localized to the plastid as a consequence of its interaction with RUS1.</text>
</comment>
<comment type="alternative products">
    <event type="alternative splicing"/>
    <isoform>
        <id>Q9SJX7-1</id>
        <name>1</name>
        <sequence type="displayed"/>
    </isoform>
    <isoform>
        <id>Q9SJX7-2</id>
        <name>2</name>
        <sequence type="described" ref="VSP_057100"/>
    </isoform>
</comment>
<comment type="tissue specificity">
    <text evidence="1 2">Expressed throughout the plant, with a higher expression near the root apical meristem, in the cortex region of the root elongation zone, in lateral roots and emerging lateral roots. Not detected in extreme root apical meristem or root cap.</text>
</comment>
<comment type="disruption phenotype">
    <text evidence="1">No visible phenotype under normal growth conditions. Extremely stunted growth, failure to develop true postembryonic leaves and arrested primary root elongation, when grown in vitro.</text>
</comment>
<comment type="miscellaneous">
    <text evidence="3">Several mutations in ASP2 (AC P46645), but not all, and any of the non-phosphorylated B6 vitamers can suppress the rus phenotype.</text>
</comment>
<comment type="similarity">
    <text evidence="6">Belongs to the RUS1 family.</text>
</comment>